<feature type="chain" id="PRO_0000279724" description="Homeobox protein vent1">
    <location>
        <begin position="1"/>
        <end position="262"/>
    </location>
</feature>
<feature type="DNA-binding region" description="Homeobox" evidence="2">
    <location>
        <begin position="127"/>
        <end position="186"/>
    </location>
</feature>
<feature type="region of interest" description="Disordered" evidence="3">
    <location>
        <begin position="16"/>
        <end position="129"/>
    </location>
</feature>
<feature type="compositionally biased region" description="Basic and acidic residues" evidence="3">
    <location>
        <begin position="16"/>
        <end position="26"/>
    </location>
</feature>
<feature type="compositionally biased region" description="Basic and acidic residues" evidence="3">
    <location>
        <begin position="44"/>
        <end position="55"/>
    </location>
</feature>
<feature type="compositionally biased region" description="Polar residues" evidence="3">
    <location>
        <begin position="58"/>
        <end position="79"/>
    </location>
</feature>
<feature type="compositionally biased region" description="Basic and acidic residues" evidence="3">
    <location>
        <begin position="114"/>
        <end position="128"/>
    </location>
</feature>
<feature type="sequence conflict" description="In Ref. 1; AAO31758." evidence="5" ref="1">
    <original>H</original>
    <variation>P</variation>
    <location>
        <position position="191"/>
    </location>
</feature>
<feature type="sequence conflict" description="In Ref. 1; AAO31758 and 2; AAT72005." evidence="5" ref="1 2">
    <original>F</original>
    <variation>L</variation>
    <location>
        <position position="211"/>
    </location>
</feature>
<evidence type="ECO:0000250" key="1">
    <source>
        <dbReference type="UniProtKB" id="Q91926"/>
    </source>
</evidence>
<evidence type="ECO:0000255" key="2">
    <source>
        <dbReference type="PROSITE-ProRule" id="PRU00108"/>
    </source>
</evidence>
<evidence type="ECO:0000256" key="3">
    <source>
        <dbReference type="SAM" id="MobiDB-lite"/>
    </source>
</evidence>
<evidence type="ECO:0000269" key="4">
    <source>
    </source>
</evidence>
<evidence type="ECO:0000305" key="5"/>
<evidence type="ECO:0000312" key="6">
    <source>
        <dbReference type="EMBL" id="AAO31758.1"/>
    </source>
</evidence>
<evidence type="ECO:0000312" key="7">
    <source>
        <dbReference type="EMBL" id="AAT72005.1"/>
    </source>
</evidence>
<evidence type="ECO:0000312" key="8">
    <source>
        <dbReference type="EMBL" id="CAJ83433.1"/>
    </source>
</evidence>
<name>VENT1_XENTR</name>
<organism>
    <name type="scientific">Xenopus tropicalis</name>
    <name type="common">Western clawed frog</name>
    <name type="synonym">Silurana tropicalis</name>
    <dbReference type="NCBI Taxonomy" id="8364"/>
    <lineage>
        <taxon>Eukaryota</taxon>
        <taxon>Metazoa</taxon>
        <taxon>Chordata</taxon>
        <taxon>Craniata</taxon>
        <taxon>Vertebrata</taxon>
        <taxon>Euteleostomi</taxon>
        <taxon>Amphibia</taxon>
        <taxon>Batrachia</taxon>
        <taxon>Anura</taxon>
        <taxon>Pipoidea</taxon>
        <taxon>Pipidae</taxon>
        <taxon>Xenopodinae</taxon>
        <taxon>Xenopus</taxon>
        <taxon>Silurana</taxon>
    </lineage>
</organism>
<sequence>MVQQGFSIDLILARNREEAPDGKDSVSSRPHIPCAPQPLAPTKYAKEIPRRKDGQEQGEITSFQCSSEEARNRQFSNPSLPALHRSSGSSDEFSPAGSEDDGTESSGRNSQENDTEHRSKSPKSDLQRRLRTAFTPQQITRLEQAFNKQRYLGASERKKLATSLQLSEIQVKTWFQNRRMKLKRQIQDQQHSMVPPPVCYPQTFSYYPGGFPVPLNSGSFYQPPAHPFQAPQHSFIPQPLHHHMRMSAHQEQFPPLFGAQYM</sequence>
<protein>
    <recommendedName>
        <fullName>Homeobox protein vent1</fullName>
        <shortName>Vent-1</shortName>
    </recommendedName>
</protein>
<proteinExistence type="evidence at transcript level"/>
<dbReference type="EMBL" id="AY187017">
    <property type="protein sequence ID" value="AAO31758.1"/>
    <property type="molecule type" value="mRNA"/>
</dbReference>
<dbReference type="EMBL" id="AC149072">
    <property type="protein sequence ID" value="AAT72005.1"/>
    <property type="molecule type" value="Genomic_DNA"/>
</dbReference>
<dbReference type="EMBL" id="CR762353">
    <property type="protein sequence ID" value="CAJ83433.1"/>
    <property type="molecule type" value="mRNA"/>
</dbReference>
<dbReference type="RefSeq" id="NP_988861.1">
    <property type="nucleotide sequence ID" value="NM_203530.1"/>
</dbReference>
<dbReference type="SMR" id="Q28ET4"/>
<dbReference type="FunCoup" id="Q28ET4">
    <property type="interactions" value="500"/>
</dbReference>
<dbReference type="PaxDb" id="8364-ENSXETP00000019491"/>
<dbReference type="GeneID" id="394455"/>
<dbReference type="KEGG" id="xtr:394455"/>
<dbReference type="AGR" id="Xenbase:XB-GENE-920868"/>
<dbReference type="CTD" id="394455"/>
<dbReference type="Xenbase" id="XB-GENE-920868">
    <property type="gene designation" value="ventx1.2"/>
</dbReference>
<dbReference type="eggNOG" id="KOG0488">
    <property type="taxonomic scope" value="Eukaryota"/>
</dbReference>
<dbReference type="HOGENOM" id="CLU_100253_0_0_1"/>
<dbReference type="InParanoid" id="Q28ET4"/>
<dbReference type="OrthoDB" id="6159439at2759"/>
<dbReference type="TreeFam" id="TF351607"/>
<dbReference type="Proteomes" id="UP000008143">
    <property type="component" value="Chromosome 7"/>
</dbReference>
<dbReference type="Bgee" id="ENSXETG00000008879">
    <property type="expression patterns" value="Expressed in gastrula and 7 other cell types or tissues"/>
</dbReference>
<dbReference type="GO" id="GO:0005634">
    <property type="term" value="C:nucleus"/>
    <property type="evidence" value="ECO:0007669"/>
    <property type="project" value="UniProtKB-SubCell"/>
</dbReference>
<dbReference type="GO" id="GO:0000981">
    <property type="term" value="F:DNA-binding transcription factor activity, RNA polymerase II-specific"/>
    <property type="evidence" value="ECO:0007669"/>
    <property type="project" value="InterPro"/>
</dbReference>
<dbReference type="GO" id="GO:0043565">
    <property type="term" value="F:sequence-specific DNA binding"/>
    <property type="evidence" value="ECO:0000250"/>
    <property type="project" value="UniProtKB"/>
</dbReference>
<dbReference type="GO" id="GO:0030509">
    <property type="term" value="P:BMP signaling pathway"/>
    <property type="evidence" value="ECO:0000250"/>
    <property type="project" value="UniProtKB"/>
</dbReference>
<dbReference type="GO" id="GO:0048264">
    <property type="term" value="P:determination of ventral identity"/>
    <property type="evidence" value="ECO:0000250"/>
    <property type="project" value="UniProtKB"/>
</dbReference>
<dbReference type="GO" id="GO:0001707">
    <property type="term" value="P:mesoderm formation"/>
    <property type="evidence" value="ECO:0000250"/>
    <property type="project" value="UniProtKB"/>
</dbReference>
<dbReference type="GO" id="GO:0045892">
    <property type="term" value="P:negative regulation of DNA-templated transcription"/>
    <property type="evidence" value="ECO:0000315"/>
    <property type="project" value="UniProtKB"/>
</dbReference>
<dbReference type="GO" id="GO:0000122">
    <property type="term" value="P:negative regulation of transcription by RNA polymerase II"/>
    <property type="evidence" value="ECO:0000315"/>
    <property type="project" value="UniProtKB"/>
</dbReference>
<dbReference type="CDD" id="cd00086">
    <property type="entry name" value="homeodomain"/>
    <property type="match status" value="1"/>
</dbReference>
<dbReference type="FunFam" id="1.10.10.60:FF:000451">
    <property type="entry name" value="Homeobox protein vent1"/>
    <property type="match status" value="1"/>
</dbReference>
<dbReference type="Gene3D" id="1.10.10.60">
    <property type="entry name" value="Homeodomain-like"/>
    <property type="match status" value="1"/>
</dbReference>
<dbReference type="InterPro" id="IPR001356">
    <property type="entry name" value="HD"/>
</dbReference>
<dbReference type="InterPro" id="IPR020479">
    <property type="entry name" value="HD_metazoa"/>
</dbReference>
<dbReference type="InterPro" id="IPR017970">
    <property type="entry name" value="Homeobox_CS"/>
</dbReference>
<dbReference type="InterPro" id="IPR050394">
    <property type="entry name" value="Homeobox_NK-like"/>
</dbReference>
<dbReference type="InterPro" id="IPR009057">
    <property type="entry name" value="Homeodomain-like_sf"/>
</dbReference>
<dbReference type="PANTHER" id="PTHR24340">
    <property type="entry name" value="HOMEOBOX PROTEIN NKX"/>
    <property type="match status" value="1"/>
</dbReference>
<dbReference type="PANTHER" id="PTHR24340:SF112">
    <property type="entry name" value="VENT HOMEOBOX"/>
    <property type="match status" value="1"/>
</dbReference>
<dbReference type="Pfam" id="PF00046">
    <property type="entry name" value="Homeodomain"/>
    <property type="match status" value="1"/>
</dbReference>
<dbReference type="PRINTS" id="PR00024">
    <property type="entry name" value="HOMEOBOX"/>
</dbReference>
<dbReference type="SMART" id="SM00389">
    <property type="entry name" value="HOX"/>
    <property type="match status" value="1"/>
</dbReference>
<dbReference type="SUPFAM" id="SSF46689">
    <property type="entry name" value="Homeodomain-like"/>
    <property type="match status" value="1"/>
</dbReference>
<dbReference type="PROSITE" id="PS00027">
    <property type="entry name" value="HOMEOBOX_1"/>
    <property type="match status" value="1"/>
</dbReference>
<dbReference type="PROSITE" id="PS50071">
    <property type="entry name" value="HOMEOBOX_2"/>
    <property type="match status" value="1"/>
</dbReference>
<gene>
    <name evidence="1" type="primary">vent1</name>
    <name evidence="1" type="synonym">vent-1</name>
    <name type="ORF">TGas069i16.1</name>
</gene>
<accession>Q28ET4</accession>
<accession>Q6F2E1</accession>
<accession>Q804C8</accession>
<keyword id="KW-0217">Developmental protein</keyword>
<keyword id="KW-0238">DNA-binding</keyword>
<keyword id="KW-0371">Homeobox</keyword>
<keyword id="KW-0539">Nucleus</keyword>
<keyword id="KW-1185">Reference proteome</keyword>
<comment type="function">
    <text evidence="1 4">Transcriptional repressor. Cooperates with vent2 in a ventral signaling pathway downstream of bmp4, which antagonizes the Spemann organizer and dorsal mesoderm formation, and leads to ventral mesoderm formation. Acts downstream of bmp4 to repress transcription of foxa4-B/XFD-1'. Binds to DNA with preference for the target sequence 5'-CTATT[T/C]G-3'. Also binds 5'-TGCATTTTG-3' at a lower frequency, and occasionally 5'-TTGATC-3'. Binds to the homeobox 2 (HBX2) repressor element in the promoter of the myf5 gene (By similarity). Cooperates with vent2 to repress myf5 expression in the ventral domain.</text>
</comment>
<comment type="subcellular location">
    <subcellularLocation>
        <location evidence="5">Nucleus</location>
    </subcellularLocation>
</comment>
<comment type="domain">
    <text evidence="1">The N-terminal region is required for repressor function.</text>
</comment>
<reference evidence="5 6" key="1">
    <citation type="journal article" date="2002" name="Development">
        <title>A study of mesoderm patterning through the analysis of the regulation of Xmyf-5 expression.</title>
        <authorList>
            <person name="Polli M."/>
            <person name="Amaya E."/>
        </authorList>
    </citation>
    <scope>NUCLEOTIDE SEQUENCE [MRNA]</scope>
    <scope>FUNCTION</scope>
    <source>
        <tissue evidence="4">Gastrula</tissue>
    </source>
</reference>
<reference evidence="7" key="2">
    <citation type="submission" date="2004-07" db="EMBL/GenBank/DDBJ databases">
        <title>Sequence of Xenopus tropicalis development genes.</title>
        <authorList>
            <person name="Qin S."/>
            <person name="Dors M."/>
            <person name="Johnson E."/>
            <person name="Bloom S."/>
            <person name="Hood L."/>
            <person name="Rowen L."/>
        </authorList>
    </citation>
    <scope>NUCLEOTIDE SEQUENCE [GENOMIC DNA]</scope>
</reference>
<reference evidence="7" key="3">
    <citation type="submission" date="2006-10" db="EMBL/GenBank/DDBJ databases">
        <authorList>
            <consortium name="Sanger Xenopus tropicalis EST/cDNA project"/>
        </authorList>
    </citation>
    <scope>NUCLEOTIDE SEQUENCE [LARGE SCALE MRNA]</scope>
    <source>
        <tissue evidence="8">Gastrula</tissue>
    </source>
</reference>